<protein>
    <recommendedName>
        <fullName evidence="1">Protease HtpX homolog</fullName>
        <ecNumber evidence="1">3.4.24.-</ecNumber>
    </recommendedName>
</protein>
<evidence type="ECO:0000255" key="1">
    <source>
        <dbReference type="HAMAP-Rule" id="MF_00188"/>
    </source>
</evidence>
<reference key="1">
    <citation type="journal article" date="2007" name="PLoS Genet.">
        <title>Genome analysis of Minibacterium massiliensis highlights the convergent evolution of water-living bacteria.</title>
        <authorList>
            <person name="Audic S."/>
            <person name="Robert C."/>
            <person name="Campagna B."/>
            <person name="Parinello H."/>
            <person name="Claverie J.-M."/>
            <person name="Raoult D."/>
            <person name="Drancourt M."/>
        </authorList>
    </citation>
    <scope>NUCLEOTIDE SEQUENCE [LARGE SCALE GENOMIC DNA]</scope>
    <source>
        <strain>Marseille</strain>
    </source>
</reference>
<gene>
    <name evidence="1" type="primary">htpX</name>
    <name type="ordered locus">mma_1278</name>
</gene>
<sequence>MKRIFLFIATNIAVIAVMSVVLSLLGVDRFISQAGLNLPMLLVFSLVVGFTGSIISLLISKPMAKWSTGARVIDAPSSSTELWLIDTVSKLAQRAGIKMPEVAVYDGEPNAFATGAFRDSALVAVSTGLLQSMTKDEVEAVLAHEVAHVANGDMVTMTLVQGVVNTFVVFLSRVVGYFVDRAISRDNNNSQGIGYTITVIVSQIVFGIAASVIVAWFSRHREFRADAGAAKLLGSPQPMMKALARLGGIEPTSLPEGLASLGINDKPGFAALFSSHPPIEDRIAALRSLQ</sequence>
<comment type="cofactor">
    <cofactor evidence="1">
        <name>Zn(2+)</name>
        <dbReference type="ChEBI" id="CHEBI:29105"/>
    </cofactor>
    <text evidence="1">Binds 1 zinc ion per subunit.</text>
</comment>
<comment type="subcellular location">
    <subcellularLocation>
        <location evidence="1">Cell inner membrane</location>
        <topology evidence="1">Multi-pass membrane protein</topology>
    </subcellularLocation>
</comment>
<comment type="similarity">
    <text evidence="1">Belongs to the peptidase M48B family.</text>
</comment>
<organism>
    <name type="scientific">Janthinobacterium sp. (strain Marseille)</name>
    <name type="common">Minibacterium massiliensis</name>
    <dbReference type="NCBI Taxonomy" id="375286"/>
    <lineage>
        <taxon>Bacteria</taxon>
        <taxon>Pseudomonadati</taxon>
        <taxon>Pseudomonadota</taxon>
        <taxon>Betaproteobacteria</taxon>
        <taxon>Burkholderiales</taxon>
        <taxon>Oxalobacteraceae</taxon>
        <taxon>Janthinobacterium</taxon>
    </lineage>
</organism>
<dbReference type="EC" id="3.4.24.-" evidence="1"/>
<dbReference type="EMBL" id="CP000269">
    <property type="protein sequence ID" value="ABR89198.1"/>
    <property type="molecule type" value="Genomic_DNA"/>
</dbReference>
<dbReference type="RefSeq" id="WP_012079135.1">
    <property type="nucleotide sequence ID" value="NC_009659.1"/>
</dbReference>
<dbReference type="SMR" id="A6SXH1"/>
<dbReference type="STRING" id="375286.mma_1278"/>
<dbReference type="MEROPS" id="M48.002"/>
<dbReference type="KEGG" id="mms:mma_1278"/>
<dbReference type="eggNOG" id="COG0501">
    <property type="taxonomic scope" value="Bacteria"/>
</dbReference>
<dbReference type="HOGENOM" id="CLU_042266_1_0_4"/>
<dbReference type="OrthoDB" id="15218at2"/>
<dbReference type="Proteomes" id="UP000006388">
    <property type="component" value="Chromosome"/>
</dbReference>
<dbReference type="GO" id="GO:0005886">
    <property type="term" value="C:plasma membrane"/>
    <property type="evidence" value="ECO:0007669"/>
    <property type="project" value="UniProtKB-SubCell"/>
</dbReference>
<dbReference type="GO" id="GO:0004222">
    <property type="term" value="F:metalloendopeptidase activity"/>
    <property type="evidence" value="ECO:0007669"/>
    <property type="project" value="UniProtKB-UniRule"/>
</dbReference>
<dbReference type="GO" id="GO:0008270">
    <property type="term" value="F:zinc ion binding"/>
    <property type="evidence" value="ECO:0007669"/>
    <property type="project" value="UniProtKB-UniRule"/>
</dbReference>
<dbReference type="GO" id="GO:0006508">
    <property type="term" value="P:proteolysis"/>
    <property type="evidence" value="ECO:0007669"/>
    <property type="project" value="UniProtKB-KW"/>
</dbReference>
<dbReference type="CDD" id="cd07335">
    <property type="entry name" value="M48B_HtpX_like"/>
    <property type="match status" value="1"/>
</dbReference>
<dbReference type="Gene3D" id="3.30.2010.10">
    <property type="entry name" value="Metalloproteases ('zincins'), catalytic domain"/>
    <property type="match status" value="1"/>
</dbReference>
<dbReference type="HAMAP" id="MF_00188">
    <property type="entry name" value="Pept_M48_protease_HtpX"/>
    <property type="match status" value="1"/>
</dbReference>
<dbReference type="InterPro" id="IPR050083">
    <property type="entry name" value="HtpX_protease"/>
</dbReference>
<dbReference type="InterPro" id="IPR022919">
    <property type="entry name" value="Pept_M48_protease_HtpX"/>
</dbReference>
<dbReference type="InterPro" id="IPR001915">
    <property type="entry name" value="Peptidase_M48"/>
</dbReference>
<dbReference type="NCBIfam" id="NF003965">
    <property type="entry name" value="PRK05457.1"/>
    <property type="match status" value="1"/>
</dbReference>
<dbReference type="PANTHER" id="PTHR43221">
    <property type="entry name" value="PROTEASE HTPX"/>
    <property type="match status" value="1"/>
</dbReference>
<dbReference type="PANTHER" id="PTHR43221:SF1">
    <property type="entry name" value="PROTEASE HTPX"/>
    <property type="match status" value="1"/>
</dbReference>
<dbReference type="Pfam" id="PF01435">
    <property type="entry name" value="Peptidase_M48"/>
    <property type="match status" value="1"/>
</dbReference>
<name>HTPX_JANMA</name>
<accession>A6SXH1</accession>
<proteinExistence type="inferred from homology"/>
<keyword id="KW-0997">Cell inner membrane</keyword>
<keyword id="KW-1003">Cell membrane</keyword>
<keyword id="KW-0378">Hydrolase</keyword>
<keyword id="KW-0472">Membrane</keyword>
<keyword id="KW-0479">Metal-binding</keyword>
<keyword id="KW-0482">Metalloprotease</keyword>
<keyword id="KW-0645">Protease</keyword>
<keyword id="KW-0812">Transmembrane</keyword>
<keyword id="KW-1133">Transmembrane helix</keyword>
<keyword id="KW-0862">Zinc</keyword>
<feature type="chain" id="PRO_1000020875" description="Protease HtpX homolog">
    <location>
        <begin position="1"/>
        <end position="290"/>
    </location>
</feature>
<feature type="transmembrane region" description="Helical" evidence="1">
    <location>
        <begin position="4"/>
        <end position="24"/>
    </location>
</feature>
<feature type="transmembrane region" description="Helical" evidence="1">
    <location>
        <begin position="39"/>
        <end position="59"/>
    </location>
</feature>
<feature type="transmembrane region" description="Helical" evidence="1">
    <location>
        <begin position="159"/>
        <end position="179"/>
    </location>
</feature>
<feature type="transmembrane region" description="Helical" evidence="1">
    <location>
        <begin position="197"/>
        <end position="217"/>
    </location>
</feature>
<feature type="active site" evidence="1">
    <location>
        <position position="145"/>
    </location>
</feature>
<feature type="binding site" evidence="1">
    <location>
        <position position="144"/>
    </location>
    <ligand>
        <name>Zn(2+)</name>
        <dbReference type="ChEBI" id="CHEBI:29105"/>
        <note>catalytic</note>
    </ligand>
</feature>
<feature type="binding site" evidence="1">
    <location>
        <position position="148"/>
    </location>
    <ligand>
        <name>Zn(2+)</name>
        <dbReference type="ChEBI" id="CHEBI:29105"/>
        <note>catalytic</note>
    </ligand>
</feature>
<feature type="binding site" evidence="1">
    <location>
        <position position="222"/>
    </location>
    <ligand>
        <name>Zn(2+)</name>
        <dbReference type="ChEBI" id="CHEBI:29105"/>
        <note>catalytic</note>
    </ligand>
</feature>